<keyword id="KW-1003">Cell membrane</keyword>
<keyword id="KW-0472">Membrane</keyword>
<keyword id="KW-1185">Reference proteome</keyword>
<keyword id="KW-0812">Transmembrane</keyword>
<keyword id="KW-1133">Transmembrane helix</keyword>
<dbReference type="EMBL" id="X76424">
    <property type="protein sequence ID" value="CAA53986.1"/>
    <property type="molecule type" value="Genomic_DNA"/>
</dbReference>
<dbReference type="EMBL" id="Z75208">
    <property type="protein sequence ID" value="CAA99542.1"/>
    <property type="status" value="ALT_INIT"/>
    <property type="molecule type" value="Genomic_DNA"/>
</dbReference>
<dbReference type="EMBL" id="AL009126">
    <property type="protein sequence ID" value="CAB14778.2"/>
    <property type="molecule type" value="Genomic_DNA"/>
</dbReference>
<dbReference type="PIR" id="D69987">
    <property type="entry name" value="D69987"/>
</dbReference>
<dbReference type="RefSeq" id="NP_390696.2">
    <property type="nucleotide sequence ID" value="NC_000964.3"/>
</dbReference>
<dbReference type="RefSeq" id="WP_003229624.1">
    <property type="nucleotide sequence ID" value="NZ_OZ025638.1"/>
</dbReference>
<dbReference type="FunCoup" id="P40736">
    <property type="interactions" value="98"/>
</dbReference>
<dbReference type="STRING" id="224308.BSU28180"/>
<dbReference type="PaxDb" id="224308-BSU28180"/>
<dbReference type="EnsemblBacteria" id="CAB14778">
    <property type="protein sequence ID" value="CAB14778"/>
    <property type="gene ID" value="BSU_28180"/>
</dbReference>
<dbReference type="GeneID" id="937352"/>
<dbReference type="KEGG" id="bsu:BSU28180"/>
<dbReference type="PATRIC" id="fig|224308.179.peg.3061"/>
<dbReference type="eggNOG" id="ENOG5032T47">
    <property type="taxonomic scope" value="Bacteria"/>
</dbReference>
<dbReference type="InParanoid" id="P40736"/>
<dbReference type="OrthoDB" id="2989824at2"/>
<dbReference type="BioCyc" id="BSUB:BSU28180-MONOMER"/>
<dbReference type="Proteomes" id="UP000001570">
    <property type="component" value="Chromosome"/>
</dbReference>
<dbReference type="GO" id="GO:0005886">
    <property type="term" value="C:plasma membrane"/>
    <property type="evidence" value="ECO:0007669"/>
    <property type="project" value="UniProtKB-SubCell"/>
</dbReference>
<sequence>MKQKSILFPCLLLAASVYAWLESGQAELFSGQDQWPVLLMLLGAAFVYQGKKEAVTPHFFIGLLLFGIGLHFFAKPKWVWWPDDFEMLLFMIGFSLLVSTVQKKEYVYEAVSMICFSLFLYFFKQIMAWLESAHIPTALLKEYWPFVFIGISLLLLLIKRKKSIR</sequence>
<organism>
    <name type="scientific">Bacillus subtilis (strain 168)</name>
    <dbReference type="NCBI Taxonomy" id="224308"/>
    <lineage>
        <taxon>Bacteria</taxon>
        <taxon>Bacillati</taxon>
        <taxon>Bacillota</taxon>
        <taxon>Bacilli</taxon>
        <taxon>Bacillales</taxon>
        <taxon>Bacillaceae</taxon>
        <taxon>Bacillus</taxon>
    </lineage>
</organism>
<feature type="chain" id="PRO_0000049894" description="Uncharacterized membrane protein YsxD">
    <location>
        <begin position="1"/>
        <end position="165"/>
    </location>
</feature>
<feature type="transmembrane region" description="Helical" evidence="1">
    <location>
        <begin position="6"/>
        <end position="26"/>
    </location>
</feature>
<feature type="transmembrane region" description="Helical" evidence="1">
    <location>
        <begin position="28"/>
        <end position="48"/>
    </location>
</feature>
<feature type="transmembrane region" description="Helical" evidence="1">
    <location>
        <begin position="54"/>
        <end position="74"/>
    </location>
</feature>
<feature type="transmembrane region" description="Helical" evidence="1">
    <location>
        <begin position="78"/>
        <end position="98"/>
    </location>
</feature>
<feature type="transmembrane region" description="Helical" evidence="1">
    <location>
        <begin position="110"/>
        <end position="130"/>
    </location>
</feature>
<feature type="transmembrane region" description="Helical" evidence="1">
    <location>
        <begin position="138"/>
        <end position="158"/>
    </location>
</feature>
<comment type="subcellular location">
    <subcellularLocation>
        <location evidence="2">Cell membrane</location>
        <topology evidence="2">Multi-pass membrane protein</topology>
    </subcellularLocation>
</comment>
<comment type="sequence caution" evidence="2">
    <conflict type="erroneous initiation">
        <sequence resource="EMBL-CDS" id="CAA99542"/>
    </conflict>
</comment>
<accession>P40736</accession>
<name>YSXD_BACSU</name>
<evidence type="ECO:0000255" key="1"/>
<evidence type="ECO:0000305" key="2"/>
<reference key="1">
    <citation type="journal article" date="1994" name="J. Bacteriol.">
        <title>Cloning, nucleotide sequence, and expression of the Bacillus subtilis lon gene.</title>
        <authorList>
            <person name="Riethdorf S."/>
            <person name="Voelker U."/>
            <person name="Gerth U."/>
            <person name="Winkler A."/>
            <person name="Engelmann S."/>
            <person name="Hecker M."/>
        </authorList>
    </citation>
    <scope>NUCLEOTIDE SEQUENCE [GENOMIC DNA]</scope>
    <source>
        <strain>168 / IS58</strain>
    </source>
</reference>
<reference key="2">
    <citation type="journal article" date="1996" name="Microbiology">
        <title>The dnaB-pheA (256 degrees-240 degrees) region of the Bacillus subtilis chromosome containing genes responsible for stress responses, the utilization of plant cell walls and primary metabolism.</title>
        <authorList>
            <person name="Wipat A."/>
            <person name="Carter N."/>
            <person name="Brignell C.S."/>
            <person name="Guy J.B."/>
            <person name="Piper K."/>
            <person name="Sanders J."/>
            <person name="Emmerson P.T."/>
            <person name="Harwood C.R."/>
        </authorList>
    </citation>
    <scope>NUCLEOTIDE SEQUENCE [GENOMIC DNA]</scope>
    <source>
        <strain>168</strain>
    </source>
</reference>
<reference key="3">
    <citation type="journal article" date="1997" name="Nature">
        <title>The complete genome sequence of the Gram-positive bacterium Bacillus subtilis.</title>
        <authorList>
            <person name="Kunst F."/>
            <person name="Ogasawara N."/>
            <person name="Moszer I."/>
            <person name="Albertini A.M."/>
            <person name="Alloni G."/>
            <person name="Azevedo V."/>
            <person name="Bertero M.G."/>
            <person name="Bessieres P."/>
            <person name="Bolotin A."/>
            <person name="Borchert S."/>
            <person name="Borriss R."/>
            <person name="Boursier L."/>
            <person name="Brans A."/>
            <person name="Braun M."/>
            <person name="Brignell S.C."/>
            <person name="Bron S."/>
            <person name="Brouillet S."/>
            <person name="Bruschi C.V."/>
            <person name="Caldwell B."/>
            <person name="Capuano V."/>
            <person name="Carter N.M."/>
            <person name="Choi S.-K."/>
            <person name="Codani J.-J."/>
            <person name="Connerton I.F."/>
            <person name="Cummings N.J."/>
            <person name="Daniel R.A."/>
            <person name="Denizot F."/>
            <person name="Devine K.M."/>
            <person name="Duesterhoeft A."/>
            <person name="Ehrlich S.D."/>
            <person name="Emmerson P.T."/>
            <person name="Entian K.-D."/>
            <person name="Errington J."/>
            <person name="Fabret C."/>
            <person name="Ferrari E."/>
            <person name="Foulger D."/>
            <person name="Fritz C."/>
            <person name="Fujita M."/>
            <person name="Fujita Y."/>
            <person name="Fuma S."/>
            <person name="Galizzi A."/>
            <person name="Galleron N."/>
            <person name="Ghim S.-Y."/>
            <person name="Glaser P."/>
            <person name="Goffeau A."/>
            <person name="Golightly E.J."/>
            <person name="Grandi G."/>
            <person name="Guiseppi G."/>
            <person name="Guy B.J."/>
            <person name="Haga K."/>
            <person name="Haiech J."/>
            <person name="Harwood C.R."/>
            <person name="Henaut A."/>
            <person name="Hilbert H."/>
            <person name="Holsappel S."/>
            <person name="Hosono S."/>
            <person name="Hullo M.-F."/>
            <person name="Itaya M."/>
            <person name="Jones L.-M."/>
            <person name="Joris B."/>
            <person name="Karamata D."/>
            <person name="Kasahara Y."/>
            <person name="Klaerr-Blanchard M."/>
            <person name="Klein C."/>
            <person name="Kobayashi Y."/>
            <person name="Koetter P."/>
            <person name="Koningstein G."/>
            <person name="Krogh S."/>
            <person name="Kumano M."/>
            <person name="Kurita K."/>
            <person name="Lapidus A."/>
            <person name="Lardinois S."/>
            <person name="Lauber J."/>
            <person name="Lazarevic V."/>
            <person name="Lee S.-M."/>
            <person name="Levine A."/>
            <person name="Liu H."/>
            <person name="Masuda S."/>
            <person name="Mauel C."/>
            <person name="Medigue C."/>
            <person name="Medina N."/>
            <person name="Mellado R.P."/>
            <person name="Mizuno M."/>
            <person name="Moestl D."/>
            <person name="Nakai S."/>
            <person name="Noback M."/>
            <person name="Noone D."/>
            <person name="O'Reilly M."/>
            <person name="Ogawa K."/>
            <person name="Ogiwara A."/>
            <person name="Oudega B."/>
            <person name="Park S.-H."/>
            <person name="Parro V."/>
            <person name="Pohl T.M."/>
            <person name="Portetelle D."/>
            <person name="Porwollik S."/>
            <person name="Prescott A.M."/>
            <person name="Presecan E."/>
            <person name="Pujic P."/>
            <person name="Purnelle B."/>
            <person name="Rapoport G."/>
            <person name="Rey M."/>
            <person name="Reynolds S."/>
            <person name="Rieger M."/>
            <person name="Rivolta C."/>
            <person name="Rocha E."/>
            <person name="Roche B."/>
            <person name="Rose M."/>
            <person name="Sadaie Y."/>
            <person name="Sato T."/>
            <person name="Scanlan E."/>
            <person name="Schleich S."/>
            <person name="Schroeter R."/>
            <person name="Scoffone F."/>
            <person name="Sekiguchi J."/>
            <person name="Sekowska A."/>
            <person name="Seror S.J."/>
            <person name="Serror P."/>
            <person name="Shin B.-S."/>
            <person name="Soldo B."/>
            <person name="Sorokin A."/>
            <person name="Tacconi E."/>
            <person name="Takagi T."/>
            <person name="Takahashi H."/>
            <person name="Takemaru K."/>
            <person name="Takeuchi M."/>
            <person name="Tamakoshi A."/>
            <person name="Tanaka T."/>
            <person name="Terpstra P."/>
            <person name="Tognoni A."/>
            <person name="Tosato V."/>
            <person name="Uchiyama S."/>
            <person name="Vandenbol M."/>
            <person name="Vannier F."/>
            <person name="Vassarotti A."/>
            <person name="Viari A."/>
            <person name="Wambutt R."/>
            <person name="Wedler E."/>
            <person name="Wedler H."/>
            <person name="Weitzenegger T."/>
            <person name="Winters P."/>
            <person name="Wipat A."/>
            <person name="Yamamoto H."/>
            <person name="Yamane K."/>
            <person name="Yasumoto K."/>
            <person name="Yata K."/>
            <person name="Yoshida K."/>
            <person name="Yoshikawa H.-F."/>
            <person name="Zumstein E."/>
            <person name="Yoshikawa H."/>
            <person name="Danchin A."/>
        </authorList>
    </citation>
    <scope>NUCLEOTIDE SEQUENCE [LARGE SCALE GENOMIC DNA]</scope>
    <source>
        <strain>168</strain>
    </source>
</reference>
<proteinExistence type="predicted"/>
<gene>
    <name type="primary">ysxD</name>
    <name type="ordered locus">BSU28180</name>
</gene>
<protein>
    <recommendedName>
        <fullName>Uncharacterized membrane protein YsxD</fullName>
    </recommendedName>
    <alternativeName>
        <fullName>ORFY</fullName>
    </alternativeName>
</protein>